<organism>
    <name type="scientific">Nitrosomonas europaea (strain ATCC 19718 / CIP 103999 / KCTC 2705 / NBRC 14298)</name>
    <dbReference type="NCBI Taxonomy" id="228410"/>
    <lineage>
        <taxon>Bacteria</taxon>
        <taxon>Pseudomonadati</taxon>
        <taxon>Pseudomonadota</taxon>
        <taxon>Betaproteobacteria</taxon>
        <taxon>Nitrosomonadales</taxon>
        <taxon>Nitrosomonadaceae</taxon>
        <taxon>Nitrosomonas</taxon>
    </lineage>
</organism>
<proteinExistence type="inferred from homology"/>
<reference key="1">
    <citation type="journal article" date="2003" name="J. Bacteriol.">
        <title>Complete genome sequence of the ammonia-oxidizing bacterium and obligate chemolithoautotroph Nitrosomonas europaea.</title>
        <authorList>
            <person name="Chain P."/>
            <person name="Lamerdin J.E."/>
            <person name="Larimer F.W."/>
            <person name="Regala W."/>
            <person name="Lao V."/>
            <person name="Land M.L."/>
            <person name="Hauser L."/>
            <person name="Hooper A.B."/>
            <person name="Klotz M.G."/>
            <person name="Norton J."/>
            <person name="Sayavedra-Soto L.A."/>
            <person name="Arciero D.M."/>
            <person name="Hommes N.G."/>
            <person name="Whittaker M.M."/>
            <person name="Arp D.J."/>
        </authorList>
    </citation>
    <scope>NUCLEOTIDE SEQUENCE [LARGE SCALE GENOMIC DNA]</scope>
    <source>
        <strain>ATCC 19718 / CIP 103999 / KCTC 2705 / NBRC 14298</strain>
    </source>
</reference>
<comment type="function">
    <text evidence="1">Binds 23S rRNA and is also seen to make contacts with the A and possibly P site tRNAs.</text>
</comment>
<comment type="subunit">
    <text evidence="1">Part of the 50S ribosomal subunit.</text>
</comment>
<comment type="similarity">
    <text evidence="1">Belongs to the universal ribosomal protein uL16 family.</text>
</comment>
<feature type="chain" id="PRO_0000062156" description="Large ribosomal subunit protein uL16">
    <location>
        <begin position="1"/>
        <end position="138"/>
    </location>
</feature>
<accession>Q82X82</accession>
<sequence>MLQPARTKFRKQHKGRNTGIATRGAKVSFGEFGLKAIGRGRLTSRQIEAARRAMTRHIKRGGRIWIRVFPDKPVSQKPAEVRMGKGKGNPEYYVAEIQPGKMLYEMDGVDESLAREAFRLAAAKLPMQTTFVIRHLGS</sequence>
<evidence type="ECO:0000255" key="1">
    <source>
        <dbReference type="HAMAP-Rule" id="MF_01342"/>
    </source>
</evidence>
<evidence type="ECO:0000305" key="2"/>
<gene>
    <name evidence="1" type="primary">rplP</name>
    <name type="ordered locus">NE0408</name>
</gene>
<keyword id="KW-1185">Reference proteome</keyword>
<keyword id="KW-0687">Ribonucleoprotein</keyword>
<keyword id="KW-0689">Ribosomal protein</keyword>
<keyword id="KW-0694">RNA-binding</keyword>
<keyword id="KW-0699">rRNA-binding</keyword>
<keyword id="KW-0820">tRNA-binding</keyword>
<protein>
    <recommendedName>
        <fullName evidence="1">Large ribosomal subunit protein uL16</fullName>
    </recommendedName>
    <alternativeName>
        <fullName evidence="2">50S ribosomal protein L16</fullName>
    </alternativeName>
</protein>
<name>RL16_NITEU</name>
<dbReference type="EMBL" id="AL954747">
    <property type="protein sequence ID" value="CAD84319.1"/>
    <property type="molecule type" value="Genomic_DNA"/>
</dbReference>
<dbReference type="RefSeq" id="WP_011111043.1">
    <property type="nucleotide sequence ID" value="NC_004757.1"/>
</dbReference>
<dbReference type="SMR" id="Q82X82"/>
<dbReference type="STRING" id="228410.NE0408"/>
<dbReference type="GeneID" id="87103617"/>
<dbReference type="KEGG" id="neu:NE0408"/>
<dbReference type="eggNOG" id="COG0197">
    <property type="taxonomic scope" value="Bacteria"/>
</dbReference>
<dbReference type="HOGENOM" id="CLU_078858_2_1_4"/>
<dbReference type="OrthoDB" id="9802589at2"/>
<dbReference type="PhylomeDB" id="Q82X82"/>
<dbReference type="Proteomes" id="UP000001416">
    <property type="component" value="Chromosome"/>
</dbReference>
<dbReference type="GO" id="GO:0022625">
    <property type="term" value="C:cytosolic large ribosomal subunit"/>
    <property type="evidence" value="ECO:0007669"/>
    <property type="project" value="TreeGrafter"/>
</dbReference>
<dbReference type="GO" id="GO:0019843">
    <property type="term" value="F:rRNA binding"/>
    <property type="evidence" value="ECO:0007669"/>
    <property type="project" value="UniProtKB-UniRule"/>
</dbReference>
<dbReference type="GO" id="GO:0003735">
    <property type="term" value="F:structural constituent of ribosome"/>
    <property type="evidence" value="ECO:0007669"/>
    <property type="project" value="InterPro"/>
</dbReference>
<dbReference type="GO" id="GO:0000049">
    <property type="term" value="F:tRNA binding"/>
    <property type="evidence" value="ECO:0007669"/>
    <property type="project" value="UniProtKB-KW"/>
</dbReference>
<dbReference type="GO" id="GO:0006412">
    <property type="term" value="P:translation"/>
    <property type="evidence" value="ECO:0007669"/>
    <property type="project" value="UniProtKB-UniRule"/>
</dbReference>
<dbReference type="CDD" id="cd01433">
    <property type="entry name" value="Ribosomal_L16_L10e"/>
    <property type="match status" value="1"/>
</dbReference>
<dbReference type="FunFam" id="3.90.1170.10:FF:000001">
    <property type="entry name" value="50S ribosomal protein L16"/>
    <property type="match status" value="1"/>
</dbReference>
<dbReference type="Gene3D" id="3.90.1170.10">
    <property type="entry name" value="Ribosomal protein L10e/L16"/>
    <property type="match status" value="1"/>
</dbReference>
<dbReference type="HAMAP" id="MF_01342">
    <property type="entry name" value="Ribosomal_uL16"/>
    <property type="match status" value="1"/>
</dbReference>
<dbReference type="InterPro" id="IPR047873">
    <property type="entry name" value="Ribosomal_uL16"/>
</dbReference>
<dbReference type="InterPro" id="IPR000114">
    <property type="entry name" value="Ribosomal_uL16_bact-type"/>
</dbReference>
<dbReference type="InterPro" id="IPR020798">
    <property type="entry name" value="Ribosomal_uL16_CS"/>
</dbReference>
<dbReference type="InterPro" id="IPR016180">
    <property type="entry name" value="Ribosomal_uL16_dom"/>
</dbReference>
<dbReference type="InterPro" id="IPR036920">
    <property type="entry name" value="Ribosomal_uL16_sf"/>
</dbReference>
<dbReference type="NCBIfam" id="TIGR01164">
    <property type="entry name" value="rplP_bact"/>
    <property type="match status" value="1"/>
</dbReference>
<dbReference type="PANTHER" id="PTHR12220">
    <property type="entry name" value="50S/60S RIBOSOMAL PROTEIN L16"/>
    <property type="match status" value="1"/>
</dbReference>
<dbReference type="PANTHER" id="PTHR12220:SF13">
    <property type="entry name" value="LARGE RIBOSOMAL SUBUNIT PROTEIN UL16M"/>
    <property type="match status" value="1"/>
</dbReference>
<dbReference type="Pfam" id="PF00252">
    <property type="entry name" value="Ribosomal_L16"/>
    <property type="match status" value="1"/>
</dbReference>
<dbReference type="PRINTS" id="PR00060">
    <property type="entry name" value="RIBOSOMALL16"/>
</dbReference>
<dbReference type="SUPFAM" id="SSF54686">
    <property type="entry name" value="Ribosomal protein L16p/L10e"/>
    <property type="match status" value="1"/>
</dbReference>
<dbReference type="PROSITE" id="PS00586">
    <property type="entry name" value="RIBOSOMAL_L16_1"/>
    <property type="match status" value="1"/>
</dbReference>